<dbReference type="EC" id="2.7.7.7" evidence="1"/>
<dbReference type="EMBL" id="CP000247">
    <property type="protein sequence ID" value="ABG68296.1"/>
    <property type="molecule type" value="Genomic_DNA"/>
</dbReference>
<dbReference type="RefSeq" id="WP_001226168.1">
    <property type="nucleotide sequence ID" value="NC_008253.1"/>
</dbReference>
<dbReference type="SMR" id="Q0TL85"/>
<dbReference type="KEGG" id="ecp:ECP_0260"/>
<dbReference type="HOGENOM" id="CLU_012348_1_2_6"/>
<dbReference type="Proteomes" id="UP000009182">
    <property type="component" value="Chromosome"/>
</dbReference>
<dbReference type="GO" id="GO:0005829">
    <property type="term" value="C:cytosol"/>
    <property type="evidence" value="ECO:0007669"/>
    <property type="project" value="TreeGrafter"/>
</dbReference>
<dbReference type="GO" id="GO:0003684">
    <property type="term" value="F:damaged DNA binding"/>
    <property type="evidence" value="ECO:0007669"/>
    <property type="project" value="InterPro"/>
</dbReference>
<dbReference type="GO" id="GO:0003887">
    <property type="term" value="F:DNA-directed DNA polymerase activity"/>
    <property type="evidence" value="ECO:0007669"/>
    <property type="project" value="UniProtKB-UniRule"/>
</dbReference>
<dbReference type="GO" id="GO:0000287">
    <property type="term" value="F:magnesium ion binding"/>
    <property type="evidence" value="ECO:0007669"/>
    <property type="project" value="UniProtKB-UniRule"/>
</dbReference>
<dbReference type="GO" id="GO:0006261">
    <property type="term" value="P:DNA-templated DNA replication"/>
    <property type="evidence" value="ECO:0007669"/>
    <property type="project" value="UniProtKB-UniRule"/>
</dbReference>
<dbReference type="GO" id="GO:0042276">
    <property type="term" value="P:error-prone translesion synthesis"/>
    <property type="evidence" value="ECO:0007669"/>
    <property type="project" value="TreeGrafter"/>
</dbReference>
<dbReference type="GO" id="GO:0009432">
    <property type="term" value="P:SOS response"/>
    <property type="evidence" value="ECO:0007669"/>
    <property type="project" value="TreeGrafter"/>
</dbReference>
<dbReference type="CDD" id="cd03586">
    <property type="entry name" value="PolY_Pol_IV_kappa"/>
    <property type="match status" value="1"/>
</dbReference>
<dbReference type="FunFam" id="1.10.150.20:FF:000019">
    <property type="entry name" value="DNA polymerase IV"/>
    <property type="match status" value="1"/>
</dbReference>
<dbReference type="FunFam" id="3.30.1490.100:FF:000002">
    <property type="entry name" value="DNA polymerase IV"/>
    <property type="match status" value="1"/>
</dbReference>
<dbReference type="FunFam" id="3.30.70.270:FF:000002">
    <property type="entry name" value="DNA polymerase IV"/>
    <property type="match status" value="1"/>
</dbReference>
<dbReference type="FunFam" id="3.40.1170.60:FF:000001">
    <property type="entry name" value="DNA polymerase IV"/>
    <property type="match status" value="1"/>
</dbReference>
<dbReference type="Gene3D" id="3.30.70.270">
    <property type="match status" value="1"/>
</dbReference>
<dbReference type="Gene3D" id="3.40.1170.60">
    <property type="match status" value="1"/>
</dbReference>
<dbReference type="Gene3D" id="1.10.150.20">
    <property type="entry name" value="5' to 3' exonuclease, C-terminal subdomain"/>
    <property type="match status" value="1"/>
</dbReference>
<dbReference type="Gene3D" id="3.30.1490.100">
    <property type="entry name" value="DNA polymerase, Y-family, little finger domain"/>
    <property type="match status" value="1"/>
</dbReference>
<dbReference type="HAMAP" id="MF_01113">
    <property type="entry name" value="DNApol_IV"/>
    <property type="match status" value="1"/>
</dbReference>
<dbReference type="InterPro" id="IPR043502">
    <property type="entry name" value="DNA/RNA_pol_sf"/>
</dbReference>
<dbReference type="InterPro" id="IPR036775">
    <property type="entry name" value="DNA_pol_Y-fam_lit_finger_sf"/>
</dbReference>
<dbReference type="InterPro" id="IPR017961">
    <property type="entry name" value="DNA_pol_Y-fam_little_finger"/>
</dbReference>
<dbReference type="InterPro" id="IPR050116">
    <property type="entry name" value="DNA_polymerase-Y"/>
</dbReference>
<dbReference type="InterPro" id="IPR022880">
    <property type="entry name" value="DNApol_IV"/>
</dbReference>
<dbReference type="InterPro" id="IPR053848">
    <property type="entry name" value="IMS_HHH_1"/>
</dbReference>
<dbReference type="InterPro" id="IPR043128">
    <property type="entry name" value="Rev_trsase/Diguanyl_cyclase"/>
</dbReference>
<dbReference type="InterPro" id="IPR001126">
    <property type="entry name" value="UmuC"/>
</dbReference>
<dbReference type="NCBIfam" id="NF002677">
    <property type="entry name" value="PRK02406.1"/>
    <property type="match status" value="1"/>
</dbReference>
<dbReference type="PANTHER" id="PTHR11076:SF33">
    <property type="entry name" value="DNA POLYMERASE KAPPA"/>
    <property type="match status" value="1"/>
</dbReference>
<dbReference type="PANTHER" id="PTHR11076">
    <property type="entry name" value="DNA REPAIR POLYMERASE UMUC / TRANSFERASE FAMILY MEMBER"/>
    <property type="match status" value="1"/>
</dbReference>
<dbReference type="Pfam" id="PF00817">
    <property type="entry name" value="IMS"/>
    <property type="match status" value="1"/>
</dbReference>
<dbReference type="Pfam" id="PF11799">
    <property type="entry name" value="IMS_C"/>
    <property type="match status" value="1"/>
</dbReference>
<dbReference type="Pfam" id="PF21999">
    <property type="entry name" value="IMS_HHH_1"/>
    <property type="match status" value="1"/>
</dbReference>
<dbReference type="SUPFAM" id="SSF56672">
    <property type="entry name" value="DNA/RNA polymerases"/>
    <property type="match status" value="1"/>
</dbReference>
<dbReference type="SUPFAM" id="SSF100879">
    <property type="entry name" value="Lesion bypass DNA polymerase (Y-family), little finger domain"/>
    <property type="match status" value="1"/>
</dbReference>
<dbReference type="PROSITE" id="PS50173">
    <property type="entry name" value="UMUC"/>
    <property type="match status" value="1"/>
</dbReference>
<organism>
    <name type="scientific">Escherichia coli O6:K15:H31 (strain 536 / UPEC)</name>
    <dbReference type="NCBI Taxonomy" id="362663"/>
    <lineage>
        <taxon>Bacteria</taxon>
        <taxon>Pseudomonadati</taxon>
        <taxon>Pseudomonadota</taxon>
        <taxon>Gammaproteobacteria</taxon>
        <taxon>Enterobacterales</taxon>
        <taxon>Enterobacteriaceae</taxon>
        <taxon>Escherichia</taxon>
    </lineage>
</organism>
<keyword id="KW-0963">Cytoplasm</keyword>
<keyword id="KW-0227">DNA damage</keyword>
<keyword id="KW-0234">DNA repair</keyword>
<keyword id="KW-0235">DNA replication</keyword>
<keyword id="KW-0238">DNA-binding</keyword>
<keyword id="KW-0239">DNA-directed DNA polymerase</keyword>
<keyword id="KW-0460">Magnesium</keyword>
<keyword id="KW-0479">Metal-binding</keyword>
<keyword id="KW-0515">Mutator protein</keyword>
<keyword id="KW-0548">Nucleotidyltransferase</keyword>
<keyword id="KW-0808">Transferase</keyword>
<evidence type="ECO:0000255" key="1">
    <source>
        <dbReference type="HAMAP-Rule" id="MF_01113"/>
    </source>
</evidence>
<reference key="1">
    <citation type="journal article" date="2006" name="Mol. Microbiol.">
        <title>Role of pathogenicity island-associated integrases in the genome plasticity of uropathogenic Escherichia coli strain 536.</title>
        <authorList>
            <person name="Hochhut B."/>
            <person name="Wilde C."/>
            <person name="Balling G."/>
            <person name="Middendorf B."/>
            <person name="Dobrindt U."/>
            <person name="Brzuszkiewicz E."/>
            <person name="Gottschalk G."/>
            <person name="Carniel E."/>
            <person name="Hacker J."/>
        </authorList>
    </citation>
    <scope>NUCLEOTIDE SEQUENCE [LARGE SCALE GENOMIC DNA]</scope>
    <source>
        <strain>536 / UPEC</strain>
    </source>
</reference>
<comment type="function">
    <text evidence="1">Poorly processive, error-prone DNA polymerase involved in untargeted mutagenesis. Copies undamaged DNA at stalled replication forks, which arise in vivo from mismatched or misaligned primer ends. These misaligned primers can be extended by PolIV. Exhibits no 3'-5' exonuclease (proofreading) activity. May be involved in translesional synthesis, in conjunction with the beta clamp from PolIII.</text>
</comment>
<comment type="catalytic activity">
    <reaction evidence="1">
        <text>DNA(n) + a 2'-deoxyribonucleoside 5'-triphosphate = DNA(n+1) + diphosphate</text>
        <dbReference type="Rhea" id="RHEA:22508"/>
        <dbReference type="Rhea" id="RHEA-COMP:17339"/>
        <dbReference type="Rhea" id="RHEA-COMP:17340"/>
        <dbReference type="ChEBI" id="CHEBI:33019"/>
        <dbReference type="ChEBI" id="CHEBI:61560"/>
        <dbReference type="ChEBI" id="CHEBI:173112"/>
        <dbReference type="EC" id="2.7.7.7"/>
    </reaction>
</comment>
<comment type="cofactor">
    <cofactor evidence="1">
        <name>Mg(2+)</name>
        <dbReference type="ChEBI" id="CHEBI:18420"/>
    </cofactor>
    <text evidence="1">Binds 2 magnesium ions per subunit.</text>
</comment>
<comment type="subunit">
    <text evidence="1">Monomer.</text>
</comment>
<comment type="subcellular location">
    <subcellularLocation>
        <location evidence="1">Cytoplasm</location>
    </subcellularLocation>
</comment>
<comment type="similarity">
    <text evidence="1">Belongs to the DNA polymerase type-Y family.</text>
</comment>
<proteinExistence type="inferred from homology"/>
<name>DPO4_ECOL5</name>
<sequence>MRKIIHVDMDCFFAAVEMRDNPALRDIPIAIGGSRERRGVISTANYPARKFGVRSAMPTGMALKLCPHLTLLPGRFDAYKEASNHIREIFSRYTSRIEPLSLDEAYLDVTDSVHCHGSATLIAQEIRQTIFNELQLTASAGVAPVKFLAKIASDMNKPNGQFVITPAEVPAFLQTLPLAKIPGVGKVSAAKLEAMGLRTCGDVQKCDLVTLLKRFGKFGRILWERSQGIDERDVNSERLRKSVGVERTMAEDIHHWSECEAIIERLYPELERRLAKVKPDLLIARQGVKLKFDDFQQTTQEHVWPRLNKSDLIATARKTWDERRGGRGVRLVGLHVTLLDPQMERQLVLGL</sequence>
<gene>
    <name evidence="1" type="primary">dinB</name>
    <name type="ordered locus">ECP_0260</name>
</gene>
<protein>
    <recommendedName>
        <fullName evidence="1">DNA polymerase IV</fullName>
        <shortName evidence="1">Pol IV</shortName>
        <ecNumber evidence="1">2.7.7.7</ecNumber>
    </recommendedName>
</protein>
<feature type="chain" id="PRO_1000084891" description="DNA polymerase IV">
    <location>
        <begin position="1"/>
        <end position="351"/>
    </location>
</feature>
<feature type="domain" description="UmuC" evidence="1">
    <location>
        <begin position="4"/>
        <end position="185"/>
    </location>
</feature>
<feature type="active site" evidence="1">
    <location>
        <position position="104"/>
    </location>
</feature>
<feature type="binding site" evidence="1">
    <location>
        <position position="8"/>
    </location>
    <ligand>
        <name>Mg(2+)</name>
        <dbReference type="ChEBI" id="CHEBI:18420"/>
    </ligand>
</feature>
<feature type="binding site" evidence="1">
    <location>
        <position position="103"/>
    </location>
    <ligand>
        <name>Mg(2+)</name>
        <dbReference type="ChEBI" id="CHEBI:18420"/>
    </ligand>
</feature>
<feature type="site" description="Substrate discrimination" evidence="1">
    <location>
        <position position="13"/>
    </location>
</feature>
<accession>Q0TL85</accession>